<dbReference type="EC" id="6.2.1.-" evidence="4"/>
<dbReference type="EMBL" id="CP001340">
    <property type="protein sequence ID" value="ACL94688.1"/>
    <property type="molecule type" value="Genomic_DNA"/>
</dbReference>
<dbReference type="RefSeq" id="WP_012640164.1">
    <property type="nucleotide sequence ID" value="NC_011916.1"/>
</dbReference>
<dbReference type="RefSeq" id="YP_002516596.1">
    <property type="nucleotide sequence ID" value="NC_011916.1"/>
</dbReference>
<dbReference type="SMR" id="A0A0H3C605"/>
<dbReference type="GeneID" id="7333616"/>
<dbReference type="KEGG" id="ccs:CCNA_01223"/>
<dbReference type="PATRIC" id="fig|565050.3.peg.1205"/>
<dbReference type="HOGENOM" id="CLU_000022_23_7_5"/>
<dbReference type="OrthoDB" id="9803968at2"/>
<dbReference type="PhylomeDB" id="A0A0H3C605"/>
<dbReference type="UniPathway" id="UPA00222"/>
<dbReference type="Proteomes" id="UP000001364">
    <property type="component" value="Chromosome"/>
</dbReference>
<dbReference type="GO" id="GO:0005886">
    <property type="term" value="C:plasma membrane"/>
    <property type="evidence" value="ECO:0007669"/>
    <property type="project" value="TreeGrafter"/>
</dbReference>
<dbReference type="GO" id="GO:0070566">
    <property type="term" value="F:adenylyltransferase activity"/>
    <property type="evidence" value="ECO:0007669"/>
    <property type="project" value="TreeGrafter"/>
</dbReference>
<dbReference type="GO" id="GO:0016874">
    <property type="term" value="F:ligase activity"/>
    <property type="evidence" value="ECO:0007669"/>
    <property type="project" value="UniProtKB-KW"/>
</dbReference>
<dbReference type="GO" id="GO:0006633">
    <property type="term" value="P:fatty acid biosynthetic process"/>
    <property type="evidence" value="ECO:0007669"/>
    <property type="project" value="TreeGrafter"/>
</dbReference>
<dbReference type="GO" id="GO:0006665">
    <property type="term" value="P:sphingolipid metabolic process"/>
    <property type="evidence" value="ECO:0007669"/>
    <property type="project" value="UniProtKB-UniPathway"/>
</dbReference>
<dbReference type="CDD" id="cd05931">
    <property type="entry name" value="FAAL"/>
    <property type="match status" value="1"/>
</dbReference>
<dbReference type="Gene3D" id="3.30.300.30">
    <property type="match status" value="1"/>
</dbReference>
<dbReference type="Gene3D" id="3.40.50.12780">
    <property type="entry name" value="N-terminal domain of ligase-like"/>
    <property type="match status" value="1"/>
</dbReference>
<dbReference type="InterPro" id="IPR045851">
    <property type="entry name" value="AMP-bd_C_sf"/>
</dbReference>
<dbReference type="InterPro" id="IPR000873">
    <property type="entry name" value="AMP-dep_synth/lig_dom"/>
</dbReference>
<dbReference type="InterPro" id="IPR042099">
    <property type="entry name" value="ANL_N_sf"/>
</dbReference>
<dbReference type="InterPro" id="IPR040097">
    <property type="entry name" value="FAAL/FAAC"/>
</dbReference>
<dbReference type="NCBIfam" id="NF006624">
    <property type="entry name" value="PRK09192.1"/>
    <property type="match status" value="1"/>
</dbReference>
<dbReference type="PANTHER" id="PTHR22754:SF32">
    <property type="entry name" value="DISCO-INTERACTING PROTEIN 2"/>
    <property type="match status" value="1"/>
</dbReference>
<dbReference type="PANTHER" id="PTHR22754">
    <property type="entry name" value="DISCO-INTERACTING PROTEIN 2 DIP2 -RELATED"/>
    <property type="match status" value="1"/>
</dbReference>
<dbReference type="Pfam" id="PF00501">
    <property type="entry name" value="AMP-binding"/>
    <property type="match status" value="1"/>
</dbReference>
<dbReference type="SUPFAM" id="SSF56801">
    <property type="entry name" value="Acetyl-CoA synthetase-like"/>
    <property type="match status" value="1"/>
</dbReference>
<evidence type="ECO:0000269" key="1">
    <source>
    </source>
</evidence>
<evidence type="ECO:0000269" key="2">
    <source>
    </source>
</evidence>
<evidence type="ECO:0000303" key="3">
    <source>
    </source>
</evidence>
<evidence type="ECO:0000305" key="4"/>
<evidence type="ECO:0000312" key="5">
    <source>
        <dbReference type="EMBL" id="ACL94688.1"/>
    </source>
</evidence>
<keyword id="KW-0436">Ligase</keyword>
<keyword id="KW-0443">Lipid metabolism</keyword>
<keyword id="KW-1185">Reference proteome</keyword>
<accession>A0A0H3C605</accession>
<name>ACYLL_CAUVN</name>
<organism>
    <name type="scientific">Caulobacter vibrioides (strain NA1000 / CB15N)</name>
    <name type="common">Caulobacter crescentus</name>
    <dbReference type="NCBI Taxonomy" id="565050"/>
    <lineage>
        <taxon>Bacteria</taxon>
        <taxon>Pseudomonadati</taxon>
        <taxon>Pseudomonadota</taxon>
        <taxon>Alphaproteobacteria</taxon>
        <taxon>Caulobacterales</taxon>
        <taxon>Caulobacteraceae</taxon>
        <taxon>Caulobacter</taxon>
    </lineage>
</organism>
<feature type="chain" id="PRO_0000455456" description="Putative acyl-CoA synthetase CCNA_01223">
    <location>
        <begin position="1"/>
        <end position="572"/>
    </location>
</feature>
<reference key="1">
    <citation type="journal article" date="2010" name="J. Bacteriol.">
        <title>The genetic basis of laboratory adaptation in Caulobacter crescentus.</title>
        <authorList>
            <person name="Marks M.E."/>
            <person name="Castro-Rojas C.M."/>
            <person name="Teiling C."/>
            <person name="Du L."/>
            <person name="Kapatral V."/>
            <person name="Walunas T.L."/>
            <person name="Crosson S."/>
        </authorList>
    </citation>
    <scope>NUCLEOTIDE SEQUENCE [LARGE SCALE GENOMIC DNA]</scope>
    <source>
        <strain>NA1000 / CB15N</strain>
    </source>
</reference>
<reference key="2">
    <citation type="journal article" date="2021" name="Environ. Microbiol.">
        <title>Five structural genes required for ceramide synthesis in Caulobacter and for bacterial survival.</title>
        <authorList>
            <person name="Olea-Ozuna R.J."/>
            <person name="Poggio S."/>
            <person name="Bergstroem E."/>
            <person name="Quiroz-Rocha E."/>
            <person name="Garcia-Soriano D.A."/>
            <person name="Sahonero-Canavesi D.X."/>
            <person name="Padilla-Gomez J."/>
            <person name="Martinez-Aguilar L."/>
            <person name="Lopez-Lara I.M."/>
            <person name="Thomas-Oates J."/>
            <person name="Geiger O."/>
        </authorList>
    </citation>
    <scope>FUNCTION</scope>
    <scope>DISRUPTION PHENOTYPE</scope>
    <source>
        <strain>NA1000 / CB15N</strain>
    </source>
</reference>
<reference key="3">
    <citation type="journal article" date="2022" name="Nat. Chem. Biol.">
        <title>Convergent evolution of bacterial ceramide synthesis.</title>
        <authorList>
            <person name="Stankeviciute G."/>
            <person name="Tang P."/>
            <person name="Ashley B."/>
            <person name="Chamberlain J.D."/>
            <person name="Hansen M.E.B."/>
            <person name="Coleman A."/>
            <person name="D'Emilia R."/>
            <person name="Fu L."/>
            <person name="Mohan E.C."/>
            <person name="Nguyen H."/>
            <person name="Guan Z."/>
            <person name="Campopiano D.J."/>
            <person name="Klein E.A."/>
        </authorList>
    </citation>
    <scope>FUNCTION</scope>
    <scope>DISRUPTION PHENOTYPE</scope>
    <source>
        <strain>NA1000 / CB15N</strain>
    </source>
</reference>
<gene>
    <name evidence="5" type="ordered locus">CCNA_01223</name>
</gene>
<protein>
    <recommendedName>
        <fullName evidence="3">Putative acyl-CoA synthetase CCNA_01223</fullName>
        <ecNumber evidence="4">6.2.1.-</ecNumber>
    </recommendedName>
</protein>
<sequence>MKAQLMITPTASDRTVRFADFPTLTQALDFAATGETGINLYSLRGELVEALPYAKLRDEAVVLARRLLAIGAKVGDSVALLAETDGDFVRAFFACQYAGLLPAPMALPTPLGGREAYIEQISNLARSAKANILIGPVGLKDWVAEIGARAGLAFAGVLADLPEDAGAALPTITPEDPCYLQFSSGSTRTPTGVLVRHKALMANCVAITRDGLQVRASDRAISWLPLYHDMGLIGFLLSPLSCQMTVDLLPTGAFVRRPLLWIDLIGRNKATIAYSPTFGYELCARRVQGQSLENYNLSHWRSAGLGGDMIRMPPLKAFVEAFAPAGFSDKAFVASYGMAEATLALSMAPLGKGLRAETLDVERLERDALAVDAPEGSERARDFARCGPALPDHFLEVRGDDGQVLPERGVGRIFAKGPSVMSAYFANPEETARVLAADGWLDTGDIGFKIDGEIVITGRAKDLIILNGRNIWPQDLEWTADNEIDGLRSGDVCAFAIPAEPEDEVVVLVQARGGDADSRAALRESVATLLRTRHGVEAKVKLVGAHALPQTSSGKLSRSKAKTAYLAGTYGD</sequence>
<comment type="function">
    <text evidence="1 2">Involved in de novo bacterial ceramide synthesis.</text>
</comment>
<comment type="pathway">
    <text evidence="4">Lipid metabolism; sphingolipid metabolism.</text>
</comment>
<comment type="disruption phenotype">
    <text evidence="1 2">Deletion mutant cannot form bacterial ceramide (PubMed:33063925, PubMed:34969973). Mutants are impaired in growth at elevated temperatures but are resistant towards the antibiotic polymyxin B (PubMed:33063925).</text>
</comment>
<comment type="similarity">
    <text evidence="4">Belongs to the ATP-dependent AMP-binding enzyme family.</text>
</comment>
<proteinExistence type="inferred from homology"/>